<proteinExistence type="inferred from homology"/>
<feature type="chain" id="PRO_1000003376" description="3-deoxy-manno-octulosonate cytidylyltransferase">
    <location>
        <begin position="1"/>
        <end position="244"/>
    </location>
</feature>
<sequence>MKHQDVAIIIPSRLSSTRLTRKPLQLIGSSTLIERVFKQVNQTNLEHIYVATDSQEIASVIEKLGGKVIFTDSNIPTGTDRTYEAFKLIPNNQNINYIVNVQGDMPFIEPESILKVIEDLKNSKYDIVTPVVKVEKDSVEAASNVTVAIDSKGKAIYFSRSLIPNGAEEFLYHVGMYGFRKSALERFVALEPTFLEKTERLEQLRLLENGMTIGTCLVNNVPISVDTPEDLSKAVKFYEKSKLV</sequence>
<accession>A8GW69</accession>
<gene>
    <name evidence="1" type="primary">kdsB</name>
    <name type="ordered locus">A1I_03715</name>
</gene>
<organism>
    <name type="scientific">Rickettsia bellii (strain OSU 85-389)</name>
    <dbReference type="NCBI Taxonomy" id="391896"/>
    <lineage>
        <taxon>Bacteria</taxon>
        <taxon>Pseudomonadati</taxon>
        <taxon>Pseudomonadota</taxon>
        <taxon>Alphaproteobacteria</taxon>
        <taxon>Rickettsiales</taxon>
        <taxon>Rickettsiaceae</taxon>
        <taxon>Rickettsieae</taxon>
        <taxon>Rickettsia</taxon>
        <taxon>belli group</taxon>
    </lineage>
</organism>
<comment type="function">
    <text evidence="1">Activates KDO (a required 8-carbon sugar) for incorporation into bacterial lipopolysaccharide in Gram-negative bacteria.</text>
</comment>
<comment type="catalytic activity">
    <reaction evidence="1">
        <text>3-deoxy-alpha-D-manno-oct-2-ulosonate + CTP = CMP-3-deoxy-beta-D-manno-octulosonate + diphosphate</text>
        <dbReference type="Rhea" id="RHEA:23448"/>
        <dbReference type="ChEBI" id="CHEBI:33019"/>
        <dbReference type="ChEBI" id="CHEBI:37563"/>
        <dbReference type="ChEBI" id="CHEBI:85986"/>
        <dbReference type="ChEBI" id="CHEBI:85987"/>
        <dbReference type="EC" id="2.7.7.38"/>
    </reaction>
</comment>
<comment type="pathway">
    <text evidence="1">Nucleotide-sugar biosynthesis; CMP-3-deoxy-D-manno-octulosonate biosynthesis; CMP-3-deoxy-D-manno-octulosonate from 3-deoxy-D-manno-octulosonate and CTP: step 1/1.</text>
</comment>
<comment type="pathway">
    <text evidence="1">Bacterial outer membrane biogenesis; lipopolysaccharide biosynthesis.</text>
</comment>
<comment type="subcellular location">
    <subcellularLocation>
        <location evidence="1">Cytoplasm</location>
    </subcellularLocation>
</comment>
<comment type="similarity">
    <text evidence="1">Belongs to the KdsB family.</text>
</comment>
<name>KDSB_RICB8</name>
<protein>
    <recommendedName>
        <fullName evidence="1">3-deoxy-manno-octulosonate cytidylyltransferase</fullName>
        <ecNumber evidence="1">2.7.7.38</ecNumber>
    </recommendedName>
    <alternativeName>
        <fullName evidence="1">CMP-2-keto-3-deoxyoctulosonic acid synthase</fullName>
        <shortName evidence="1">CKS</shortName>
        <shortName evidence="1">CMP-KDO synthase</shortName>
    </alternativeName>
</protein>
<reference key="1">
    <citation type="submission" date="2007-09" db="EMBL/GenBank/DDBJ databases">
        <title>Complete genome sequencing of Rickettsia bellii.</title>
        <authorList>
            <person name="Madan A."/>
            <person name="Lee H."/>
            <person name="Madan A."/>
            <person name="Yoon J.-G."/>
            <person name="Ryu G.-Y."/>
            <person name="Dasch G."/>
            <person name="Ereemeva M."/>
        </authorList>
    </citation>
    <scope>NUCLEOTIDE SEQUENCE [LARGE SCALE GENOMIC DNA]</scope>
    <source>
        <strain>OSU 85-389</strain>
    </source>
</reference>
<dbReference type="EC" id="2.7.7.38" evidence="1"/>
<dbReference type="EMBL" id="CP000849">
    <property type="protein sequence ID" value="ABV79096.1"/>
    <property type="molecule type" value="Genomic_DNA"/>
</dbReference>
<dbReference type="RefSeq" id="WP_011477649.1">
    <property type="nucleotide sequence ID" value="NC_009883.1"/>
</dbReference>
<dbReference type="SMR" id="A8GW69"/>
<dbReference type="KEGG" id="rbo:A1I_03715"/>
<dbReference type="HOGENOM" id="CLU_065038_0_1_5"/>
<dbReference type="UniPathway" id="UPA00030"/>
<dbReference type="UniPathway" id="UPA00358">
    <property type="reaction ID" value="UER00476"/>
</dbReference>
<dbReference type="GO" id="GO:0005829">
    <property type="term" value="C:cytosol"/>
    <property type="evidence" value="ECO:0007669"/>
    <property type="project" value="TreeGrafter"/>
</dbReference>
<dbReference type="GO" id="GO:0008690">
    <property type="term" value="F:3-deoxy-manno-octulosonate cytidylyltransferase activity"/>
    <property type="evidence" value="ECO:0007669"/>
    <property type="project" value="UniProtKB-UniRule"/>
</dbReference>
<dbReference type="GO" id="GO:0033468">
    <property type="term" value="P:CMP-keto-3-deoxy-D-manno-octulosonic acid biosynthetic process"/>
    <property type="evidence" value="ECO:0007669"/>
    <property type="project" value="UniProtKB-UniRule"/>
</dbReference>
<dbReference type="GO" id="GO:0009103">
    <property type="term" value="P:lipopolysaccharide biosynthetic process"/>
    <property type="evidence" value="ECO:0007669"/>
    <property type="project" value="UniProtKB-UniRule"/>
</dbReference>
<dbReference type="CDD" id="cd02517">
    <property type="entry name" value="CMP-KDO-Synthetase"/>
    <property type="match status" value="1"/>
</dbReference>
<dbReference type="Gene3D" id="3.90.550.10">
    <property type="entry name" value="Spore Coat Polysaccharide Biosynthesis Protein SpsA, Chain A"/>
    <property type="match status" value="1"/>
</dbReference>
<dbReference type="HAMAP" id="MF_00057">
    <property type="entry name" value="KdsB"/>
    <property type="match status" value="1"/>
</dbReference>
<dbReference type="InterPro" id="IPR003329">
    <property type="entry name" value="Cytidylyl_trans"/>
</dbReference>
<dbReference type="InterPro" id="IPR004528">
    <property type="entry name" value="KdsB"/>
</dbReference>
<dbReference type="InterPro" id="IPR029044">
    <property type="entry name" value="Nucleotide-diphossugar_trans"/>
</dbReference>
<dbReference type="NCBIfam" id="TIGR00466">
    <property type="entry name" value="kdsB"/>
    <property type="match status" value="1"/>
</dbReference>
<dbReference type="NCBIfam" id="NF003948">
    <property type="entry name" value="PRK05450.1-1"/>
    <property type="match status" value="1"/>
</dbReference>
<dbReference type="NCBIfam" id="NF003952">
    <property type="entry name" value="PRK05450.1-5"/>
    <property type="match status" value="1"/>
</dbReference>
<dbReference type="PANTHER" id="PTHR42866">
    <property type="entry name" value="3-DEOXY-MANNO-OCTULOSONATE CYTIDYLYLTRANSFERASE"/>
    <property type="match status" value="1"/>
</dbReference>
<dbReference type="PANTHER" id="PTHR42866:SF2">
    <property type="entry name" value="3-DEOXY-MANNO-OCTULOSONATE CYTIDYLYLTRANSFERASE, MITOCHONDRIAL"/>
    <property type="match status" value="1"/>
</dbReference>
<dbReference type="Pfam" id="PF02348">
    <property type="entry name" value="CTP_transf_3"/>
    <property type="match status" value="1"/>
</dbReference>
<dbReference type="SUPFAM" id="SSF53448">
    <property type="entry name" value="Nucleotide-diphospho-sugar transferases"/>
    <property type="match status" value="1"/>
</dbReference>
<keyword id="KW-0963">Cytoplasm</keyword>
<keyword id="KW-0448">Lipopolysaccharide biosynthesis</keyword>
<keyword id="KW-0548">Nucleotidyltransferase</keyword>
<keyword id="KW-0808">Transferase</keyword>
<evidence type="ECO:0000255" key="1">
    <source>
        <dbReference type="HAMAP-Rule" id="MF_00057"/>
    </source>
</evidence>